<proteinExistence type="inferred from homology"/>
<keyword id="KW-0067">ATP-binding</keyword>
<keyword id="KW-0963">Cytoplasm</keyword>
<keyword id="KW-0227">DNA damage</keyword>
<keyword id="KW-0228">DNA excision</keyword>
<keyword id="KW-0234">DNA repair</keyword>
<keyword id="KW-0267">Excision nuclease</keyword>
<keyword id="KW-0347">Helicase</keyword>
<keyword id="KW-0378">Hydrolase</keyword>
<keyword id="KW-0547">Nucleotide-binding</keyword>
<keyword id="KW-0742">SOS response</keyword>
<comment type="function">
    <text evidence="1">The UvrABC repair system catalyzes the recognition and processing of DNA lesions. A damage recognition complex composed of 2 UvrA and 2 UvrB subunits scans DNA for abnormalities. Upon binding of the UvrA(2)B(2) complex to a putative damaged site, the DNA wraps around one UvrB monomer. DNA wrap is dependent on ATP binding by UvrB and probably causes local melting of the DNA helix, facilitating insertion of UvrB beta-hairpin between the DNA strands. Then UvrB probes one DNA strand for the presence of a lesion. If a lesion is found the UvrA subunits dissociate and the UvrB-DNA preincision complex is formed. This complex is subsequently bound by UvrC and the second UvrB is released. If no lesion is found, the DNA wraps around the other UvrB subunit that will check the other stand for damage.</text>
</comment>
<comment type="subunit">
    <text evidence="1">Forms a heterotetramer with UvrA during the search for lesions. Interacts with UvrC in an incision complex.</text>
</comment>
<comment type="subcellular location">
    <subcellularLocation>
        <location evidence="1">Cytoplasm</location>
    </subcellularLocation>
</comment>
<comment type="domain">
    <text evidence="1">The beta-hairpin motif is involved in DNA binding.</text>
</comment>
<comment type="similarity">
    <text evidence="1">Belongs to the UvrB family.</text>
</comment>
<reference key="1">
    <citation type="journal article" date="2010" name="Genome Biol.">
        <title>Structure and dynamics of the pan-genome of Streptococcus pneumoniae and closely related species.</title>
        <authorList>
            <person name="Donati C."/>
            <person name="Hiller N.L."/>
            <person name="Tettelin H."/>
            <person name="Muzzi A."/>
            <person name="Croucher N.J."/>
            <person name="Angiuoli S.V."/>
            <person name="Oggioni M."/>
            <person name="Dunning Hotopp J.C."/>
            <person name="Hu F.Z."/>
            <person name="Riley D.R."/>
            <person name="Covacci A."/>
            <person name="Mitchell T.J."/>
            <person name="Bentley S.D."/>
            <person name="Kilian M."/>
            <person name="Ehrlich G.D."/>
            <person name="Rappuoli R."/>
            <person name="Moxon E.R."/>
            <person name="Masignani V."/>
        </authorList>
    </citation>
    <scope>NUCLEOTIDE SEQUENCE [LARGE SCALE GENOMIC DNA]</scope>
    <source>
        <strain>Hungary19A-6</strain>
    </source>
</reference>
<gene>
    <name evidence="1" type="primary">uvrB</name>
    <name type="ordered locus">SPH_1353</name>
</gene>
<organism>
    <name type="scientific">Streptococcus pneumoniae (strain Hungary19A-6)</name>
    <dbReference type="NCBI Taxonomy" id="487214"/>
    <lineage>
        <taxon>Bacteria</taxon>
        <taxon>Bacillati</taxon>
        <taxon>Bacillota</taxon>
        <taxon>Bacilli</taxon>
        <taxon>Lactobacillales</taxon>
        <taxon>Streptococcaceae</taxon>
        <taxon>Streptococcus</taxon>
    </lineage>
</organism>
<accession>B1IC35</accession>
<sequence length="662" mass="75721">MINHITDNQFKLVSKYQPSGDQPQAIEQLVDNIEGGEKAQILMGATGTGKTYTMSQVISKVNKPTLVIAHNKTLAGQLYGEFKEFFPENAVEYFVSYYDYYQPEAYVPSSDTYIEKDSSVNDEIDKLRHSATSALLERNDVIVVASVSCIYGLGSPKEYADSVVSLRPGLEISRDKLLNDLVDIQFERNDIDFQRGRFRVRGDVVEIFPASRDEHAFRVEFFGDEIDRIREVEALTGQVLGEVDHLAIFPATHFVTNDDHMEVAIAKIQAELEEQLAVFEKEGKLLEAQRLKQRTEYDIEMLREMGYTNGVENYSRHMDGRSEGEPPYTLLDFFPDDFLIMIDESHMTIGQIKGMYNGDRSRKEMLVNYGFRLPSALDNRPLRREEFESHVHQIVYVSATPGDYENEQTETVIEQIIRPTGLLDPEVEVRPTMGQIDDLLGEINARVEKNERTFITTLTKKMAEDLTDYFKEMGIKVKYMHSDIKTLERTEIIRDLRLGVFDVLVGINLLREGIDVPEVSLVAILDADKEGFLRNERGLIQTIGRAARNSEGHVIMYADTVTQSMQRAIDETARRRKIQMAYNEEHGIVPQTIKKEIRDLIAVTKAVAKEEDKEVDITSLNKQERKELVKKLEKQMQEAVEVLDFELAAQIRDMMLEVKALD</sequence>
<protein>
    <recommendedName>
        <fullName evidence="1">UvrABC system protein B</fullName>
        <shortName evidence="1">Protein UvrB</shortName>
    </recommendedName>
    <alternativeName>
        <fullName evidence="1">Excinuclease ABC subunit B</fullName>
    </alternativeName>
</protein>
<feature type="chain" id="PRO_1000099571" description="UvrABC system protein B">
    <location>
        <begin position="1"/>
        <end position="662"/>
    </location>
</feature>
<feature type="domain" description="Helicase ATP-binding" evidence="1">
    <location>
        <begin position="31"/>
        <end position="188"/>
    </location>
</feature>
<feature type="domain" description="Helicase C-terminal" evidence="1">
    <location>
        <begin position="435"/>
        <end position="601"/>
    </location>
</feature>
<feature type="domain" description="UVR" evidence="1">
    <location>
        <begin position="626"/>
        <end position="661"/>
    </location>
</feature>
<feature type="short sequence motif" description="Beta-hairpin">
    <location>
        <begin position="97"/>
        <end position="120"/>
    </location>
</feature>
<feature type="binding site" evidence="1">
    <location>
        <begin position="44"/>
        <end position="51"/>
    </location>
    <ligand>
        <name>ATP</name>
        <dbReference type="ChEBI" id="CHEBI:30616"/>
    </ligand>
</feature>
<name>UVRB_STRPI</name>
<dbReference type="EMBL" id="CP000936">
    <property type="protein sequence ID" value="ACA36828.1"/>
    <property type="molecule type" value="Genomic_DNA"/>
</dbReference>
<dbReference type="RefSeq" id="WP_000607028.1">
    <property type="nucleotide sequence ID" value="NC_010380.1"/>
</dbReference>
<dbReference type="SMR" id="B1IC35"/>
<dbReference type="KEGG" id="spv:SPH_1353"/>
<dbReference type="HOGENOM" id="CLU_009621_2_1_9"/>
<dbReference type="Proteomes" id="UP000002163">
    <property type="component" value="Chromosome"/>
</dbReference>
<dbReference type="GO" id="GO:0005737">
    <property type="term" value="C:cytoplasm"/>
    <property type="evidence" value="ECO:0007669"/>
    <property type="project" value="UniProtKB-SubCell"/>
</dbReference>
<dbReference type="GO" id="GO:0009380">
    <property type="term" value="C:excinuclease repair complex"/>
    <property type="evidence" value="ECO:0007669"/>
    <property type="project" value="InterPro"/>
</dbReference>
<dbReference type="GO" id="GO:0005524">
    <property type="term" value="F:ATP binding"/>
    <property type="evidence" value="ECO:0007669"/>
    <property type="project" value="UniProtKB-UniRule"/>
</dbReference>
<dbReference type="GO" id="GO:0016887">
    <property type="term" value="F:ATP hydrolysis activity"/>
    <property type="evidence" value="ECO:0007669"/>
    <property type="project" value="InterPro"/>
</dbReference>
<dbReference type="GO" id="GO:0003677">
    <property type="term" value="F:DNA binding"/>
    <property type="evidence" value="ECO:0007669"/>
    <property type="project" value="UniProtKB-UniRule"/>
</dbReference>
<dbReference type="GO" id="GO:0009381">
    <property type="term" value="F:excinuclease ABC activity"/>
    <property type="evidence" value="ECO:0007669"/>
    <property type="project" value="UniProtKB-UniRule"/>
</dbReference>
<dbReference type="GO" id="GO:0004386">
    <property type="term" value="F:helicase activity"/>
    <property type="evidence" value="ECO:0007669"/>
    <property type="project" value="UniProtKB-KW"/>
</dbReference>
<dbReference type="GO" id="GO:0006289">
    <property type="term" value="P:nucleotide-excision repair"/>
    <property type="evidence" value="ECO:0007669"/>
    <property type="project" value="UniProtKB-UniRule"/>
</dbReference>
<dbReference type="GO" id="GO:0009432">
    <property type="term" value="P:SOS response"/>
    <property type="evidence" value="ECO:0007669"/>
    <property type="project" value="UniProtKB-UniRule"/>
</dbReference>
<dbReference type="CDD" id="cd17916">
    <property type="entry name" value="DEXHc_UvrB"/>
    <property type="match status" value="1"/>
</dbReference>
<dbReference type="CDD" id="cd18790">
    <property type="entry name" value="SF2_C_UvrB"/>
    <property type="match status" value="1"/>
</dbReference>
<dbReference type="Gene3D" id="3.40.50.300">
    <property type="entry name" value="P-loop containing nucleotide triphosphate hydrolases"/>
    <property type="match status" value="3"/>
</dbReference>
<dbReference type="Gene3D" id="4.10.860.10">
    <property type="entry name" value="UVR domain"/>
    <property type="match status" value="1"/>
</dbReference>
<dbReference type="HAMAP" id="MF_00204">
    <property type="entry name" value="UvrB"/>
    <property type="match status" value="1"/>
</dbReference>
<dbReference type="InterPro" id="IPR006935">
    <property type="entry name" value="Helicase/UvrB_N"/>
</dbReference>
<dbReference type="InterPro" id="IPR014001">
    <property type="entry name" value="Helicase_ATP-bd"/>
</dbReference>
<dbReference type="InterPro" id="IPR001650">
    <property type="entry name" value="Helicase_C-like"/>
</dbReference>
<dbReference type="InterPro" id="IPR027417">
    <property type="entry name" value="P-loop_NTPase"/>
</dbReference>
<dbReference type="InterPro" id="IPR001943">
    <property type="entry name" value="UVR_dom"/>
</dbReference>
<dbReference type="InterPro" id="IPR036876">
    <property type="entry name" value="UVR_dom_sf"/>
</dbReference>
<dbReference type="InterPro" id="IPR004807">
    <property type="entry name" value="UvrB"/>
</dbReference>
<dbReference type="InterPro" id="IPR041471">
    <property type="entry name" value="UvrB_inter"/>
</dbReference>
<dbReference type="InterPro" id="IPR024759">
    <property type="entry name" value="UvrB_YAD/RRR_dom"/>
</dbReference>
<dbReference type="NCBIfam" id="NF003673">
    <property type="entry name" value="PRK05298.1"/>
    <property type="match status" value="1"/>
</dbReference>
<dbReference type="NCBIfam" id="TIGR00631">
    <property type="entry name" value="uvrb"/>
    <property type="match status" value="1"/>
</dbReference>
<dbReference type="PANTHER" id="PTHR24029">
    <property type="entry name" value="UVRABC SYSTEM PROTEIN B"/>
    <property type="match status" value="1"/>
</dbReference>
<dbReference type="PANTHER" id="PTHR24029:SF0">
    <property type="entry name" value="UVRABC SYSTEM PROTEIN B"/>
    <property type="match status" value="1"/>
</dbReference>
<dbReference type="Pfam" id="PF00271">
    <property type="entry name" value="Helicase_C"/>
    <property type="match status" value="1"/>
</dbReference>
<dbReference type="Pfam" id="PF04851">
    <property type="entry name" value="ResIII"/>
    <property type="match status" value="1"/>
</dbReference>
<dbReference type="Pfam" id="PF02151">
    <property type="entry name" value="UVR"/>
    <property type="match status" value="1"/>
</dbReference>
<dbReference type="Pfam" id="PF12344">
    <property type="entry name" value="UvrB"/>
    <property type="match status" value="1"/>
</dbReference>
<dbReference type="Pfam" id="PF17757">
    <property type="entry name" value="UvrB_inter"/>
    <property type="match status" value="1"/>
</dbReference>
<dbReference type="SMART" id="SM00487">
    <property type="entry name" value="DEXDc"/>
    <property type="match status" value="1"/>
</dbReference>
<dbReference type="SMART" id="SM00490">
    <property type="entry name" value="HELICc"/>
    <property type="match status" value="1"/>
</dbReference>
<dbReference type="SUPFAM" id="SSF46600">
    <property type="entry name" value="C-terminal UvrC-binding domain of UvrB"/>
    <property type="match status" value="1"/>
</dbReference>
<dbReference type="SUPFAM" id="SSF52540">
    <property type="entry name" value="P-loop containing nucleoside triphosphate hydrolases"/>
    <property type="match status" value="2"/>
</dbReference>
<dbReference type="PROSITE" id="PS51192">
    <property type="entry name" value="HELICASE_ATP_BIND_1"/>
    <property type="match status" value="1"/>
</dbReference>
<dbReference type="PROSITE" id="PS51194">
    <property type="entry name" value="HELICASE_CTER"/>
    <property type="match status" value="1"/>
</dbReference>
<dbReference type="PROSITE" id="PS50151">
    <property type="entry name" value="UVR"/>
    <property type="match status" value="1"/>
</dbReference>
<evidence type="ECO:0000255" key="1">
    <source>
        <dbReference type="HAMAP-Rule" id="MF_00204"/>
    </source>
</evidence>